<sequence>MFARQAIRAAQPLKSQYRRYATESTSGGGSNAALYAGLAAAAGAGAYYFLNQGDNAAKVKDAAKDAEAKAKEAVGQGKSKVEGAVGKAAFTGGDQGFISLKLDSVENINHNTKKFRFELPESDQVSGLQVASALLTKFKGPEMQKPAIRPYTPTSDESEQGFIDLLVKKYPNGVMSEHMHDMVPGQRLDFKGPIPKYPWSANKHDHIALIAGGTGITPMYQLARAIFNNPADKTKVTLVFANVTEEDILLKREFEDLENTYPQRFRAFYVLDNPPKSWSGGKGFVNKELLKTVLPEPKTENVKVFVCGPPGMYKAISGPKVSPSDQGELAGILKELGYSKEQVYKF</sequence>
<keyword id="KW-0274">FAD</keyword>
<keyword id="KW-0285">Flavoprotein</keyword>
<keyword id="KW-0472">Membrane</keyword>
<keyword id="KW-0496">Mitochondrion</keyword>
<keyword id="KW-1000">Mitochondrion outer membrane</keyword>
<keyword id="KW-0520">NAD</keyword>
<keyword id="KW-0560">Oxidoreductase</keyword>
<keyword id="KW-1185">Reference proteome</keyword>
<keyword id="KW-0812">Transmembrane</keyword>
<keyword id="KW-1133">Transmembrane helix</keyword>
<dbReference type="EC" id="1.6.2.2"/>
<dbReference type="EMBL" id="CP009809">
    <property type="protein sequence ID" value="ATZ49725.1"/>
    <property type="molecule type" value="Genomic_DNA"/>
</dbReference>
<dbReference type="RefSeq" id="XP_001549033.1">
    <property type="nucleotide sequence ID" value="XM_001548983.1"/>
</dbReference>
<dbReference type="SMR" id="A6SI59"/>
<dbReference type="EnsemblFungi" id="Bcin05g01380.1">
    <property type="protein sequence ID" value="Bcin05p01380.1"/>
    <property type="gene ID" value="Bcin05g01380"/>
</dbReference>
<dbReference type="GeneID" id="5429512"/>
<dbReference type="KEGG" id="bfu:BCIN_05g01380"/>
<dbReference type="VEuPathDB" id="FungiDB:Bcin05g01380"/>
<dbReference type="OMA" id="KGPEMQK"/>
<dbReference type="OrthoDB" id="432685at2759"/>
<dbReference type="Proteomes" id="UP000001798">
    <property type="component" value="Chromosome bcin05"/>
</dbReference>
<dbReference type="GO" id="GO:0005741">
    <property type="term" value="C:mitochondrial outer membrane"/>
    <property type="evidence" value="ECO:0007669"/>
    <property type="project" value="UniProtKB-SubCell"/>
</dbReference>
<dbReference type="GO" id="GO:0004128">
    <property type="term" value="F:cytochrome-b5 reductase activity, acting on NAD(P)H"/>
    <property type="evidence" value="ECO:0007669"/>
    <property type="project" value="UniProtKB-EC"/>
</dbReference>
<dbReference type="GO" id="GO:0006696">
    <property type="term" value="P:ergosterol biosynthetic process"/>
    <property type="evidence" value="ECO:0007669"/>
    <property type="project" value="TreeGrafter"/>
</dbReference>
<dbReference type="CDD" id="cd06183">
    <property type="entry name" value="cyt_b5_reduct_like"/>
    <property type="match status" value="1"/>
</dbReference>
<dbReference type="FunFam" id="2.40.30.10:FF:000032">
    <property type="entry name" value="NADH-cytochrome b5 reductase"/>
    <property type="match status" value="1"/>
</dbReference>
<dbReference type="FunFam" id="3.40.50.80:FF:000009">
    <property type="entry name" value="NADH-cytochrome b5 reductase"/>
    <property type="match status" value="1"/>
</dbReference>
<dbReference type="Gene3D" id="3.40.50.80">
    <property type="entry name" value="Nucleotide-binding domain of ferredoxin-NADP reductase (FNR) module"/>
    <property type="match status" value="1"/>
</dbReference>
<dbReference type="Gene3D" id="2.40.30.10">
    <property type="entry name" value="Translation factors"/>
    <property type="match status" value="1"/>
</dbReference>
<dbReference type="InterPro" id="IPR001834">
    <property type="entry name" value="CBR-like"/>
</dbReference>
<dbReference type="InterPro" id="IPR008333">
    <property type="entry name" value="Cbr1-like_FAD-bd_dom"/>
</dbReference>
<dbReference type="InterPro" id="IPR017927">
    <property type="entry name" value="FAD-bd_FR_type"/>
</dbReference>
<dbReference type="InterPro" id="IPR001709">
    <property type="entry name" value="Flavoprot_Pyr_Nucl_cyt_Rdtase"/>
</dbReference>
<dbReference type="InterPro" id="IPR039261">
    <property type="entry name" value="FNR_nucleotide-bd"/>
</dbReference>
<dbReference type="InterPro" id="IPR001433">
    <property type="entry name" value="OxRdtase_FAD/NAD-bd"/>
</dbReference>
<dbReference type="InterPro" id="IPR017938">
    <property type="entry name" value="Riboflavin_synthase-like_b-brl"/>
</dbReference>
<dbReference type="PANTHER" id="PTHR19370">
    <property type="entry name" value="NADH-CYTOCHROME B5 REDUCTASE"/>
    <property type="match status" value="1"/>
</dbReference>
<dbReference type="PANTHER" id="PTHR19370:SF171">
    <property type="entry name" value="NADH-CYTOCHROME B5 REDUCTASE 2"/>
    <property type="match status" value="1"/>
</dbReference>
<dbReference type="Pfam" id="PF00970">
    <property type="entry name" value="FAD_binding_6"/>
    <property type="match status" value="1"/>
</dbReference>
<dbReference type="Pfam" id="PF00175">
    <property type="entry name" value="NAD_binding_1"/>
    <property type="match status" value="1"/>
</dbReference>
<dbReference type="PRINTS" id="PR00406">
    <property type="entry name" value="CYTB5RDTASE"/>
</dbReference>
<dbReference type="PRINTS" id="PR00371">
    <property type="entry name" value="FPNCR"/>
</dbReference>
<dbReference type="SUPFAM" id="SSF52343">
    <property type="entry name" value="Ferredoxin reductase-like, C-terminal NADP-linked domain"/>
    <property type="match status" value="1"/>
</dbReference>
<dbReference type="SUPFAM" id="SSF63380">
    <property type="entry name" value="Riboflavin synthase domain-like"/>
    <property type="match status" value="1"/>
</dbReference>
<dbReference type="PROSITE" id="PS51384">
    <property type="entry name" value="FAD_FR"/>
    <property type="match status" value="1"/>
</dbReference>
<feature type="chain" id="PRO_0000330175" description="NADH-cytochrome b5 reductase 2">
    <location>
        <begin position="1"/>
        <end position="346"/>
    </location>
</feature>
<feature type="transmembrane region" description="Helical" evidence="2">
    <location>
        <begin position="28"/>
        <end position="50"/>
    </location>
</feature>
<feature type="domain" description="FAD-binding FR-type" evidence="3">
    <location>
        <begin position="95"/>
        <end position="200"/>
    </location>
</feature>
<feature type="binding site" evidence="1">
    <location>
        <begin position="203"/>
        <end position="238"/>
    </location>
    <ligand>
        <name>FAD</name>
        <dbReference type="ChEBI" id="CHEBI:57692"/>
    </ligand>
</feature>
<reference key="1">
    <citation type="journal article" date="2011" name="PLoS Genet.">
        <title>Genomic analysis of the necrotrophic fungal pathogens Sclerotinia sclerotiorum and Botrytis cinerea.</title>
        <authorList>
            <person name="Amselem J."/>
            <person name="Cuomo C.A."/>
            <person name="van Kan J.A.L."/>
            <person name="Viaud M."/>
            <person name="Benito E.P."/>
            <person name="Couloux A."/>
            <person name="Coutinho P.M."/>
            <person name="de Vries R.P."/>
            <person name="Dyer P.S."/>
            <person name="Fillinger S."/>
            <person name="Fournier E."/>
            <person name="Gout L."/>
            <person name="Hahn M."/>
            <person name="Kohn L."/>
            <person name="Lapalu N."/>
            <person name="Plummer K.M."/>
            <person name="Pradier J.-M."/>
            <person name="Quevillon E."/>
            <person name="Sharon A."/>
            <person name="Simon A."/>
            <person name="ten Have A."/>
            <person name="Tudzynski B."/>
            <person name="Tudzynski P."/>
            <person name="Wincker P."/>
            <person name="Andrew M."/>
            <person name="Anthouard V."/>
            <person name="Beever R.E."/>
            <person name="Beffa R."/>
            <person name="Benoit I."/>
            <person name="Bouzid O."/>
            <person name="Brault B."/>
            <person name="Chen Z."/>
            <person name="Choquer M."/>
            <person name="Collemare J."/>
            <person name="Cotton P."/>
            <person name="Danchin E.G."/>
            <person name="Da Silva C."/>
            <person name="Gautier A."/>
            <person name="Giraud C."/>
            <person name="Giraud T."/>
            <person name="Gonzalez C."/>
            <person name="Grossetete S."/>
            <person name="Gueldener U."/>
            <person name="Henrissat B."/>
            <person name="Howlett B.J."/>
            <person name="Kodira C."/>
            <person name="Kretschmer M."/>
            <person name="Lappartient A."/>
            <person name="Leroch M."/>
            <person name="Levis C."/>
            <person name="Mauceli E."/>
            <person name="Neuveglise C."/>
            <person name="Oeser B."/>
            <person name="Pearson M."/>
            <person name="Poulain J."/>
            <person name="Poussereau N."/>
            <person name="Quesneville H."/>
            <person name="Rascle C."/>
            <person name="Schumacher J."/>
            <person name="Segurens B."/>
            <person name="Sexton A."/>
            <person name="Silva E."/>
            <person name="Sirven C."/>
            <person name="Soanes D.M."/>
            <person name="Talbot N.J."/>
            <person name="Templeton M."/>
            <person name="Yandava C."/>
            <person name="Yarden O."/>
            <person name="Zeng Q."/>
            <person name="Rollins J.A."/>
            <person name="Lebrun M.-H."/>
            <person name="Dickman M."/>
        </authorList>
    </citation>
    <scope>NUCLEOTIDE SEQUENCE [LARGE SCALE GENOMIC DNA]</scope>
    <source>
        <strain>B05.10</strain>
    </source>
</reference>
<reference key="2">
    <citation type="journal article" date="2012" name="Eukaryot. Cell">
        <title>Genome update of Botrytis cinerea strains B05.10 and T4.</title>
        <authorList>
            <person name="Staats M."/>
            <person name="van Kan J.A.L."/>
        </authorList>
    </citation>
    <scope>NUCLEOTIDE SEQUENCE [LARGE SCALE GENOMIC DNA]</scope>
    <scope>GENOME REANNOTATION</scope>
    <source>
        <strain>B05.10</strain>
    </source>
</reference>
<reference key="3">
    <citation type="journal article" date="2017" name="Mol. Plant Pathol.">
        <title>A gapless genome sequence of the fungus Botrytis cinerea.</title>
        <authorList>
            <person name="van Kan J.A.L."/>
            <person name="Stassen J.H.M."/>
            <person name="Mosbach A."/>
            <person name="van der Lee T.A.J."/>
            <person name="Faino L."/>
            <person name="Farmer A.D."/>
            <person name="Papasotiriou D.G."/>
            <person name="Zhou S."/>
            <person name="Seidl M.F."/>
            <person name="Cottam E."/>
            <person name="Edel D."/>
            <person name="Hahn M."/>
            <person name="Schwartz D.C."/>
            <person name="Dietrich R.A."/>
            <person name="Widdison S."/>
            <person name="Scalliet G."/>
        </authorList>
    </citation>
    <scope>NUCLEOTIDE SEQUENCE [LARGE SCALE GENOMIC DNA]</scope>
    <scope>GENOME REANNOTATION</scope>
    <source>
        <strain>B05.10</strain>
    </source>
</reference>
<name>MCR1_BOTFB</name>
<organism>
    <name type="scientific">Botryotinia fuckeliana (strain B05.10)</name>
    <name type="common">Noble rot fungus</name>
    <name type="synonym">Botrytis cinerea</name>
    <dbReference type="NCBI Taxonomy" id="332648"/>
    <lineage>
        <taxon>Eukaryota</taxon>
        <taxon>Fungi</taxon>
        <taxon>Dikarya</taxon>
        <taxon>Ascomycota</taxon>
        <taxon>Pezizomycotina</taxon>
        <taxon>Leotiomycetes</taxon>
        <taxon>Helotiales</taxon>
        <taxon>Sclerotiniaceae</taxon>
        <taxon>Botrytis</taxon>
    </lineage>
</organism>
<gene>
    <name type="primary">mcr1</name>
    <name type="ORF">BC1G_12441</name>
    <name type="ORF">BCIN_05g01380</name>
</gene>
<evidence type="ECO:0000250" key="1"/>
<evidence type="ECO:0000255" key="2"/>
<evidence type="ECO:0000255" key="3">
    <source>
        <dbReference type="PROSITE-ProRule" id="PRU00716"/>
    </source>
</evidence>
<evidence type="ECO:0000305" key="4"/>
<comment type="function">
    <text evidence="1">May mediate the reduction of outer membrane cytochrome b5.</text>
</comment>
<comment type="catalytic activity">
    <reaction>
        <text>2 Fe(III)-[cytochrome b5] + NADH = 2 Fe(II)-[cytochrome b5] + NAD(+) + H(+)</text>
        <dbReference type="Rhea" id="RHEA:46680"/>
        <dbReference type="Rhea" id="RHEA-COMP:10438"/>
        <dbReference type="Rhea" id="RHEA-COMP:10439"/>
        <dbReference type="ChEBI" id="CHEBI:15378"/>
        <dbReference type="ChEBI" id="CHEBI:29033"/>
        <dbReference type="ChEBI" id="CHEBI:29034"/>
        <dbReference type="ChEBI" id="CHEBI:57540"/>
        <dbReference type="ChEBI" id="CHEBI:57945"/>
        <dbReference type="EC" id="1.6.2.2"/>
    </reaction>
</comment>
<comment type="cofactor">
    <cofactor evidence="1">
        <name>FAD</name>
        <dbReference type="ChEBI" id="CHEBI:57692"/>
    </cofactor>
</comment>
<comment type="subcellular location">
    <subcellularLocation>
        <location evidence="1">Mitochondrion outer membrane</location>
        <topology evidence="1">Single-pass membrane protein</topology>
    </subcellularLocation>
</comment>
<comment type="similarity">
    <text evidence="4">Belongs to the flavoprotein pyridine nucleotide cytochrome reductase family.</text>
</comment>
<protein>
    <recommendedName>
        <fullName>NADH-cytochrome b5 reductase 2</fullName>
        <ecNumber>1.6.2.2</ecNumber>
    </recommendedName>
    <alternativeName>
        <fullName>Mitochondrial cytochrome b reductase</fullName>
    </alternativeName>
</protein>
<proteinExistence type="inferred from homology"/>
<accession>A6SI59</accession>
<accession>A0A384JGL0</accession>